<dbReference type="EMBL" id="CP000539">
    <property type="protein sequence ID" value="ABM40659.1"/>
    <property type="molecule type" value="Genomic_DNA"/>
</dbReference>
<dbReference type="SMR" id="A1W334"/>
<dbReference type="STRING" id="232721.Ajs_0407"/>
<dbReference type="KEGG" id="ajs:Ajs_0407"/>
<dbReference type="eggNOG" id="COG0203">
    <property type="taxonomic scope" value="Bacteria"/>
</dbReference>
<dbReference type="HOGENOM" id="CLU_074407_2_0_4"/>
<dbReference type="Proteomes" id="UP000000645">
    <property type="component" value="Chromosome"/>
</dbReference>
<dbReference type="GO" id="GO:0022625">
    <property type="term" value="C:cytosolic large ribosomal subunit"/>
    <property type="evidence" value="ECO:0007669"/>
    <property type="project" value="TreeGrafter"/>
</dbReference>
<dbReference type="GO" id="GO:0003735">
    <property type="term" value="F:structural constituent of ribosome"/>
    <property type="evidence" value="ECO:0007669"/>
    <property type="project" value="InterPro"/>
</dbReference>
<dbReference type="GO" id="GO:0006412">
    <property type="term" value="P:translation"/>
    <property type="evidence" value="ECO:0007669"/>
    <property type="project" value="UniProtKB-UniRule"/>
</dbReference>
<dbReference type="FunFam" id="3.90.1030.10:FF:000001">
    <property type="entry name" value="50S ribosomal protein L17"/>
    <property type="match status" value="1"/>
</dbReference>
<dbReference type="Gene3D" id="3.90.1030.10">
    <property type="entry name" value="Ribosomal protein L17"/>
    <property type="match status" value="1"/>
</dbReference>
<dbReference type="HAMAP" id="MF_01368">
    <property type="entry name" value="Ribosomal_bL17"/>
    <property type="match status" value="1"/>
</dbReference>
<dbReference type="InterPro" id="IPR000456">
    <property type="entry name" value="Ribosomal_bL17"/>
</dbReference>
<dbReference type="InterPro" id="IPR047859">
    <property type="entry name" value="Ribosomal_bL17_CS"/>
</dbReference>
<dbReference type="InterPro" id="IPR036373">
    <property type="entry name" value="Ribosomal_bL17_sf"/>
</dbReference>
<dbReference type="NCBIfam" id="TIGR00059">
    <property type="entry name" value="L17"/>
    <property type="match status" value="1"/>
</dbReference>
<dbReference type="PANTHER" id="PTHR14413:SF16">
    <property type="entry name" value="LARGE RIBOSOMAL SUBUNIT PROTEIN BL17M"/>
    <property type="match status" value="1"/>
</dbReference>
<dbReference type="PANTHER" id="PTHR14413">
    <property type="entry name" value="RIBOSOMAL PROTEIN L17"/>
    <property type="match status" value="1"/>
</dbReference>
<dbReference type="Pfam" id="PF01196">
    <property type="entry name" value="Ribosomal_L17"/>
    <property type="match status" value="1"/>
</dbReference>
<dbReference type="SUPFAM" id="SSF64263">
    <property type="entry name" value="Prokaryotic ribosomal protein L17"/>
    <property type="match status" value="1"/>
</dbReference>
<dbReference type="PROSITE" id="PS01167">
    <property type="entry name" value="RIBOSOMAL_L17"/>
    <property type="match status" value="1"/>
</dbReference>
<comment type="subunit">
    <text evidence="1">Part of the 50S ribosomal subunit. Contacts protein L32.</text>
</comment>
<comment type="similarity">
    <text evidence="1">Belongs to the bacterial ribosomal protein bL17 family.</text>
</comment>
<evidence type="ECO:0000255" key="1">
    <source>
        <dbReference type="HAMAP-Rule" id="MF_01368"/>
    </source>
</evidence>
<evidence type="ECO:0000305" key="2"/>
<gene>
    <name evidence="1" type="primary">rplQ</name>
    <name type="ordered locus">Ajs_0407</name>
</gene>
<reference key="1">
    <citation type="submission" date="2006-12" db="EMBL/GenBank/DDBJ databases">
        <title>Complete sequence of chromosome 1 of Acidovorax sp. JS42.</title>
        <authorList>
            <person name="Copeland A."/>
            <person name="Lucas S."/>
            <person name="Lapidus A."/>
            <person name="Barry K."/>
            <person name="Detter J.C."/>
            <person name="Glavina del Rio T."/>
            <person name="Dalin E."/>
            <person name="Tice H."/>
            <person name="Pitluck S."/>
            <person name="Chertkov O."/>
            <person name="Brettin T."/>
            <person name="Bruce D."/>
            <person name="Han C."/>
            <person name="Tapia R."/>
            <person name="Gilna P."/>
            <person name="Schmutz J."/>
            <person name="Larimer F."/>
            <person name="Land M."/>
            <person name="Hauser L."/>
            <person name="Kyrpides N."/>
            <person name="Kim E."/>
            <person name="Stahl D."/>
            <person name="Richardson P."/>
        </authorList>
    </citation>
    <scope>NUCLEOTIDE SEQUENCE [LARGE SCALE GENOMIC DNA]</scope>
    <source>
        <strain>JS42</strain>
    </source>
</reference>
<protein>
    <recommendedName>
        <fullName evidence="1">Large ribosomal subunit protein bL17</fullName>
    </recommendedName>
    <alternativeName>
        <fullName evidence="2">50S ribosomal protein L17</fullName>
    </alternativeName>
</protein>
<feature type="chain" id="PRO_1000055759" description="Large ribosomal subunit protein bL17">
    <location>
        <begin position="1"/>
        <end position="129"/>
    </location>
</feature>
<keyword id="KW-0687">Ribonucleoprotein</keyword>
<keyword id="KW-0689">Ribosomal protein</keyword>
<organism>
    <name type="scientific">Acidovorax sp. (strain JS42)</name>
    <dbReference type="NCBI Taxonomy" id="232721"/>
    <lineage>
        <taxon>Bacteria</taxon>
        <taxon>Pseudomonadati</taxon>
        <taxon>Pseudomonadota</taxon>
        <taxon>Betaproteobacteria</taxon>
        <taxon>Burkholderiales</taxon>
        <taxon>Comamonadaceae</taxon>
        <taxon>Acidovorax</taxon>
    </lineage>
</organism>
<name>RL17_ACISJ</name>
<accession>A1W334</accession>
<proteinExistence type="inferred from homology"/>
<sequence>MRHGHGLRKLNRTSSHRLAMLQNMMNSLIEHEAIKTTLPKAKELRRVIEPMITLAKEDSVANRRLAFNRLRDRDSVTKLFNDLGPRFKTRPGGYTRILKMGFRVGDNAPMAYVELVDRAETPEVSSTEA</sequence>